<feature type="chain" id="PRO_1000126234" description="Transaldolase">
    <location>
        <begin position="1"/>
        <end position="316"/>
    </location>
</feature>
<feature type="active site" description="Schiff-base intermediate with substrate" evidence="2">
    <location>
        <position position="132"/>
    </location>
</feature>
<protein>
    <recommendedName>
        <fullName evidence="2">Transaldolase</fullName>
        <ecNumber evidence="2">2.2.1.2</ecNumber>
    </recommendedName>
</protein>
<organism>
    <name type="scientific">Aliivibrio salmonicida (strain LFI1238)</name>
    <name type="common">Vibrio salmonicida (strain LFI1238)</name>
    <dbReference type="NCBI Taxonomy" id="316275"/>
    <lineage>
        <taxon>Bacteria</taxon>
        <taxon>Pseudomonadati</taxon>
        <taxon>Pseudomonadota</taxon>
        <taxon>Gammaproteobacteria</taxon>
        <taxon>Vibrionales</taxon>
        <taxon>Vibrionaceae</taxon>
        <taxon>Aliivibrio</taxon>
    </lineage>
</organism>
<gene>
    <name evidence="2" type="primary">tal</name>
    <name type="ordered locus">VSAL_II0521</name>
</gene>
<sequence>MTTQLEQLRKLTTVVADTGDIEAIAKYTPEDATTNPSLILKAAQIAEYAPLIDASIEYAKAQSNDKAQQVQDTCDMLAVSIGKEILKVVPGRISTEIDACLSYDTEGSIAKARQLIKMYNEAGITNDRILIKLASTWEGIRAAEVLEKEGINCNLTLLFSFAQARACAEAGVFLISPFVGRIMDWYKAKEGRDFEPSEDPGVISVAGIYNYYKEHGYKTVVMGASFRNIGEILELAGCDRLTISPNLLQELEDATGEVVEKLIDTNGNKECPAAMTHAEFLWDHNQDPMAVEKLAEGIRNFAVDQGKLEEMIAAKL</sequence>
<reference key="1">
    <citation type="journal article" date="2008" name="BMC Genomics">
        <title>The genome sequence of the fish pathogen Aliivibrio salmonicida strain LFI1238 shows extensive evidence of gene decay.</title>
        <authorList>
            <person name="Hjerde E."/>
            <person name="Lorentzen M.S."/>
            <person name="Holden M.T."/>
            <person name="Seeger K."/>
            <person name="Paulsen S."/>
            <person name="Bason N."/>
            <person name="Churcher C."/>
            <person name="Harris D."/>
            <person name="Norbertczak H."/>
            <person name="Quail M.A."/>
            <person name="Sanders S."/>
            <person name="Thurston S."/>
            <person name="Parkhill J."/>
            <person name="Willassen N.P."/>
            <person name="Thomson N.R."/>
        </authorList>
    </citation>
    <scope>NUCLEOTIDE SEQUENCE [LARGE SCALE GENOMIC DNA]</scope>
    <source>
        <strain>LFI1238</strain>
    </source>
</reference>
<name>TAL_ALISL</name>
<evidence type="ECO:0000250" key="1"/>
<evidence type="ECO:0000255" key="2">
    <source>
        <dbReference type="HAMAP-Rule" id="MF_00492"/>
    </source>
</evidence>
<keyword id="KW-0963">Cytoplasm</keyword>
<keyword id="KW-0570">Pentose shunt</keyword>
<keyword id="KW-0704">Schiff base</keyword>
<keyword id="KW-0808">Transferase</keyword>
<accession>B6ERE2</accession>
<comment type="function">
    <text evidence="2">Transaldolase is important for the balance of metabolites in the pentose-phosphate pathway.</text>
</comment>
<comment type="catalytic activity">
    <reaction evidence="2">
        <text>D-sedoheptulose 7-phosphate + D-glyceraldehyde 3-phosphate = D-erythrose 4-phosphate + beta-D-fructose 6-phosphate</text>
        <dbReference type="Rhea" id="RHEA:17053"/>
        <dbReference type="ChEBI" id="CHEBI:16897"/>
        <dbReference type="ChEBI" id="CHEBI:57483"/>
        <dbReference type="ChEBI" id="CHEBI:57634"/>
        <dbReference type="ChEBI" id="CHEBI:59776"/>
        <dbReference type="EC" id="2.2.1.2"/>
    </reaction>
</comment>
<comment type="pathway">
    <text evidence="2">Carbohydrate degradation; pentose phosphate pathway; D-glyceraldehyde 3-phosphate and beta-D-fructose 6-phosphate from D-ribose 5-phosphate and D-xylulose 5-phosphate (non-oxidative stage): step 2/3.</text>
</comment>
<comment type="subunit">
    <text evidence="1">Homodimer.</text>
</comment>
<comment type="subcellular location">
    <subcellularLocation>
        <location evidence="2">Cytoplasm</location>
    </subcellularLocation>
</comment>
<comment type="similarity">
    <text evidence="2">Belongs to the transaldolase family. Type 1 subfamily.</text>
</comment>
<proteinExistence type="inferred from homology"/>
<dbReference type="EC" id="2.2.1.2" evidence="2"/>
<dbReference type="EMBL" id="FM178380">
    <property type="protein sequence ID" value="CAQ81275.1"/>
    <property type="molecule type" value="Genomic_DNA"/>
</dbReference>
<dbReference type="RefSeq" id="WP_012551846.1">
    <property type="nucleotide sequence ID" value="NC_011313.1"/>
</dbReference>
<dbReference type="SMR" id="B6ERE2"/>
<dbReference type="KEGG" id="vsa:VSAL_II0521"/>
<dbReference type="eggNOG" id="COG0176">
    <property type="taxonomic scope" value="Bacteria"/>
</dbReference>
<dbReference type="HOGENOM" id="CLU_047470_0_1_6"/>
<dbReference type="UniPathway" id="UPA00115">
    <property type="reaction ID" value="UER00414"/>
</dbReference>
<dbReference type="Proteomes" id="UP000001730">
    <property type="component" value="Chromosome 2"/>
</dbReference>
<dbReference type="GO" id="GO:0005829">
    <property type="term" value="C:cytosol"/>
    <property type="evidence" value="ECO:0007669"/>
    <property type="project" value="TreeGrafter"/>
</dbReference>
<dbReference type="GO" id="GO:0004801">
    <property type="term" value="F:transaldolase activity"/>
    <property type="evidence" value="ECO:0000250"/>
    <property type="project" value="UniProtKB"/>
</dbReference>
<dbReference type="GO" id="GO:0005975">
    <property type="term" value="P:carbohydrate metabolic process"/>
    <property type="evidence" value="ECO:0007669"/>
    <property type="project" value="InterPro"/>
</dbReference>
<dbReference type="GO" id="GO:0006098">
    <property type="term" value="P:pentose-phosphate shunt"/>
    <property type="evidence" value="ECO:0007669"/>
    <property type="project" value="UniProtKB-UniRule"/>
</dbReference>
<dbReference type="CDD" id="cd00957">
    <property type="entry name" value="Transaldolase_TalAB"/>
    <property type="match status" value="1"/>
</dbReference>
<dbReference type="FunFam" id="3.20.20.70:FF:000002">
    <property type="entry name" value="Transaldolase"/>
    <property type="match status" value="1"/>
</dbReference>
<dbReference type="Gene3D" id="3.20.20.70">
    <property type="entry name" value="Aldolase class I"/>
    <property type="match status" value="1"/>
</dbReference>
<dbReference type="HAMAP" id="MF_00492">
    <property type="entry name" value="Transaldolase_1"/>
    <property type="match status" value="1"/>
</dbReference>
<dbReference type="InterPro" id="IPR013785">
    <property type="entry name" value="Aldolase_TIM"/>
</dbReference>
<dbReference type="InterPro" id="IPR001585">
    <property type="entry name" value="TAL/FSA"/>
</dbReference>
<dbReference type="InterPro" id="IPR004730">
    <property type="entry name" value="Transaldolase_1"/>
</dbReference>
<dbReference type="InterPro" id="IPR018225">
    <property type="entry name" value="Transaldolase_AS"/>
</dbReference>
<dbReference type="NCBIfam" id="NF009001">
    <property type="entry name" value="PRK12346.1"/>
    <property type="match status" value="1"/>
</dbReference>
<dbReference type="NCBIfam" id="TIGR00874">
    <property type="entry name" value="talAB"/>
    <property type="match status" value="1"/>
</dbReference>
<dbReference type="PANTHER" id="PTHR10683">
    <property type="entry name" value="TRANSALDOLASE"/>
    <property type="match status" value="1"/>
</dbReference>
<dbReference type="PANTHER" id="PTHR10683:SF18">
    <property type="entry name" value="TRANSALDOLASE"/>
    <property type="match status" value="1"/>
</dbReference>
<dbReference type="Pfam" id="PF00923">
    <property type="entry name" value="TAL_FSA"/>
    <property type="match status" value="1"/>
</dbReference>
<dbReference type="SUPFAM" id="SSF51569">
    <property type="entry name" value="Aldolase"/>
    <property type="match status" value="1"/>
</dbReference>
<dbReference type="PROSITE" id="PS01054">
    <property type="entry name" value="TRANSALDOLASE_1"/>
    <property type="match status" value="1"/>
</dbReference>
<dbReference type="PROSITE" id="PS00958">
    <property type="entry name" value="TRANSALDOLASE_2"/>
    <property type="match status" value="1"/>
</dbReference>